<gene>
    <name type="primary">pqqE</name>
    <name type="ordered locus">MexAM1_META1p1748</name>
</gene>
<protein>
    <recommendedName>
        <fullName evidence="5">PqqA peptide cyclase</fullName>
        <ecNumber evidence="3 4">1.21.98.4</ecNumber>
    </recommendedName>
    <alternativeName>
        <fullName evidence="5">Coenzyme PQQ synthesis protein E</fullName>
    </alternativeName>
    <alternativeName>
        <fullName>Pyrroloquinoline quinone biosynthesis protein E</fullName>
    </alternativeName>
</protein>
<evidence type="ECO:0000250" key="1"/>
<evidence type="ECO:0000255" key="2">
    <source>
        <dbReference type="PROSITE-ProRule" id="PRU01266"/>
    </source>
</evidence>
<evidence type="ECO:0000269" key="3">
    <source>
    </source>
</evidence>
<evidence type="ECO:0000269" key="4">
    <source>
    </source>
</evidence>
<evidence type="ECO:0000305" key="5"/>
<evidence type="ECO:0007829" key="6">
    <source>
        <dbReference type="PDB" id="6C8V"/>
    </source>
</evidence>
<feature type="chain" id="PRO_0000219941" description="PqqA peptide cyclase">
    <location>
        <begin position="1"/>
        <end position="384"/>
    </location>
</feature>
<feature type="domain" description="Radical SAM core" evidence="2">
    <location>
        <begin position="14"/>
        <end position="230"/>
    </location>
</feature>
<feature type="binding site" evidence="1">
    <location>
        <position position="28"/>
    </location>
    <ligand>
        <name>[4Fe-4S] cluster</name>
        <dbReference type="ChEBI" id="CHEBI:49883"/>
        <note>4Fe-4S-S-AdoMet</note>
    </ligand>
</feature>
<feature type="binding site" evidence="1">
    <location>
        <position position="32"/>
    </location>
    <ligand>
        <name>[4Fe-4S] cluster</name>
        <dbReference type="ChEBI" id="CHEBI:49883"/>
        <note>4Fe-4S-S-AdoMet</note>
    </ligand>
</feature>
<feature type="binding site" evidence="1">
    <location>
        <position position="35"/>
    </location>
    <ligand>
        <name>[4Fe-4S] cluster</name>
        <dbReference type="ChEBI" id="CHEBI:49883"/>
        <note>4Fe-4S-S-AdoMet</note>
    </ligand>
</feature>
<feature type="sequence conflict" description="In Ref. 1; AAB58898." evidence="5" ref="1">
    <original>KSPA</original>
    <variation>SHGR</variation>
    <location>
        <begin position="293"/>
        <end position="296"/>
    </location>
</feature>
<feature type="strand" evidence="6">
    <location>
        <begin position="19"/>
        <end position="23"/>
    </location>
</feature>
<feature type="helix" evidence="6">
    <location>
        <begin position="50"/>
        <end position="63"/>
    </location>
</feature>
<feature type="strand" evidence="6">
    <location>
        <begin position="67"/>
        <end position="73"/>
    </location>
</feature>
<feature type="helix" evidence="6">
    <location>
        <begin position="75"/>
        <end position="77"/>
    </location>
</feature>
<feature type="helix" evidence="6">
    <location>
        <begin position="81"/>
        <end position="90"/>
    </location>
</feature>
<feature type="strand" evidence="6">
    <location>
        <begin position="94"/>
        <end position="99"/>
    </location>
</feature>
<feature type="helix" evidence="6">
    <location>
        <begin position="103"/>
        <end position="105"/>
    </location>
</feature>
<feature type="turn" evidence="6">
    <location>
        <begin position="106"/>
        <end position="108"/>
    </location>
</feature>
<feature type="helix" evidence="6">
    <location>
        <begin position="109"/>
        <end position="114"/>
    </location>
</feature>
<feature type="strand" evidence="6">
    <location>
        <begin position="119"/>
        <end position="123"/>
    </location>
</feature>
<feature type="helix" evidence="6">
    <location>
        <begin position="143"/>
        <end position="154"/>
    </location>
</feature>
<feature type="strand" evidence="6">
    <location>
        <begin position="159"/>
        <end position="164"/>
    </location>
</feature>
<feature type="turn" evidence="6">
    <location>
        <begin position="167"/>
        <end position="169"/>
    </location>
</feature>
<feature type="helix" evidence="6">
    <location>
        <begin position="170"/>
        <end position="172"/>
    </location>
</feature>
<feature type="helix" evidence="6">
    <location>
        <begin position="173"/>
        <end position="183"/>
    </location>
</feature>
<feature type="strand" evidence="6">
    <location>
        <begin position="186"/>
        <end position="195"/>
    </location>
</feature>
<feature type="helix" evidence="6">
    <location>
        <begin position="210"/>
        <end position="226"/>
    </location>
</feature>
<feature type="turn" evidence="6">
    <location>
        <begin position="227"/>
        <end position="230"/>
    </location>
</feature>
<feature type="strand" evidence="6">
    <location>
        <begin position="232"/>
        <end position="236"/>
    </location>
</feature>
<feature type="helix" evidence="6">
    <location>
        <begin position="248"/>
        <end position="250"/>
    </location>
</feature>
<feature type="strand" evidence="6">
    <location>
        <begin position="254"/>
        <end position="259"/>
    </location>
</feature>
<feature type="strand" evidence="6">
    <location>
        <begin position="263"/>
        <end position="268"/>
    </location>
</feature>
<feature type="helix" evidence="6">
    <location>
        <begin position="271"/>
        <end position="273"/>
    </location>
</feature>
<feature type="turn" evidence="6">
    <location>
        <begin position="282"/>
        <end position="284"/>
    </location>
</feature>
<feature type="helix" evidence="6">
    <location>
        <begin position="287"/>
        <end position="293"/>
    </location>
</feature>
<feature type="helix" evidence="6">
    <location>
        <begin position="295"/>
        <end position="299"/>
    </location>
</feature>
<feature type="strand" evidence="6">
    <location>
        <begin position="301"/>
        <end position="303"/>
    </location>
</feature>
<feature type="helix" evidence="6">
    <location>
        <begin position="310"/>
        <end position="312"/>
    </location>
</feature>
<feature type="helix" evidence="6">
    <location>
        <begin position="314"/>
        <end position="317"/>
    </location>
</feature>
<feature type="helix" evidence="6">
    <location>
        <begin position="324"/>
        <end position="331"/>
    </location>
</feature>
<feature type="helix" evidence="6">
    <location>
        <begin position="347"/>
        <end position="352"/>
    </location>
</feature>
<name>PQQE_METEA</name>
<accession>P71517</accession>
<accession>C5B128</accession>
<reference key="1">
    <citation type="journal article" date="1997" name="Microbiology">
        <title>Sequence analysis of pqq genes required for biosynthesis of pyrroloquinoline quinone in Methylobacterium extorquens AM1 and the purification of a biosynthetic intermediate.</title>
        <authorList>
            <person name="Toyama H."/>
            <person name="Chistoserdova L."/>
            <person name="Lidstrom M.E."/>
        </authorList>
    </citation>
    <scope>NUCLEOTIDE SEQUENCE [GENOMIC DNA]</scope>
</reference>
<reference key="2">
    <citation type="journal article" date="2009" name="PLoS ONE">
        <title>Methylobacterium genome sequences: a reference blueprint to investigate microbial metabolism of C1 compounds from natural and industrial sources.</title>
        <authorList>
            <person name="Vuilleumier S."/>
            <person name="Chistoserdova L."/>
            <person name="Lee M.-C."/>
            <person name="Bringel F."/>
            <person name="Lajus A."/>
            <person name="Zhou Y."/>
            <person name="Gourion B."/>
            <person name="Barbe V."/>
            <person name="Chang J."/>
            <person name="Cruveiller S."/>
            <person name="Dossat C."/>
            <person name="Gillett W."/>
            <person name="Gruffaz C."/>
            <person name="Haugen E."/>
            <person name="Hourcade E."/>
            <person name="Levy R."/>
            <person name="Mangenot S."/>
            <person name="Muller E."/>
            <person name="Nadalig T."/>
            <person name="Pagni M."/>
            <person name="Penny C."/>
            <person name="Peyraud R."/>
            <person name="Robinson D.G."/>
            <person name="Roche D."/>
            <person name="Rouy Z."/>
            <person name="Saenampechek C."/>
            <person name="Salvignol G."/>
            <person name="Vallenet D."/>
            <person name="Wu Z."/>
            <person name="Marx C.J."/>
            <person name="Vorholt J.A."/>
            <person name="Olson M.V."/>
            <person name="Kaul R."/>
            <person name="Weissenbach J."/>
            <person name="Medigue C."/>
            <person name="Lidstrom M.E."/>
        </authorList>
    </citation>
    <scope>NUCLEOTIDE SEQUENCE [LARGE SCALE GENOMIC DNA]</scope>
    <source>
        <strain>ATCC 14718 / DSM 1338 / JCM 2805 / NCIMB 9133 / AM1</strain>
    </source>
</reference>
<reference key="3">
    <citation type="journal article" date="2015" name="J. Biol. Chem.">
        <title>PqqD is a novel peptide chaperone that forms a ternary complex with the radical S-adenosylmethionine protein PqqE in the pyrroloquinoline quinone biosynthetic pathway.</title>
        <authorList>
            <person name="Latham J.A."/>
            <person name="Iavarone A.T."/>
            <person name="Barr I."/>
            <person name="Juthani P.V."/>
            <person name="Klinman J.P."/>
        </authorList>
    </citation>
    <scope>FUNCTION</scope>
    <scope>CATALYTIC ACTIVITY</scope>
    <scope>INTERACTION WITH PQQD</scope>
    <source>
        <strain>ATCC 14718 / DSM 1338 / JCM 2805 / NCIMB 9133 / AM1</strain>
    </source>
</reference>
<reference key="4">
    <citation type="journal article" date="2016" name="J. Biol. Chem.">
        <title>Demonstration that the radical S-adenosylmethionine (SAM) enzyme PqqE catalyzes de novo carbon-carbon cross-linking within a peptide substrate PqqA in the presence of the peptide chaperone PqqD.</title>
        <authorList>
            <person name="Barr I."/>
            <person name="Latham J.A."/>
            <person name="Iavarone A.T."/>
            <person name="Chantarojsiri T."/>
            <person name="Hwang J.D."/>
            <person name="Klinman J.P."/>
        </authorList>
    </citation>
    <scope>FUNCTION</scope>
    <scope>CATALYTIC ACTIVITY</scope>
    <source>
        <strain>ATCC 14718 / DSM 1338 / JCM 2805 / NCIMB 9133 / AM1</strain>
    </source>
</reference>
<comment type="function">
    <text evidence="3">Catalyzes the cross-linking of a glutamate residue and a tyrosine residue in the PqqA protein as part of the biosynthesis of pyrroloquinoline quinone (PQQ).</text>
</comment>
<comment type="catalytic activity">
    <reaction evidence="3">
        <text>[PQQ precursor protein] + S-adenosyl-L-methionine = E-Y cross-linked-[PQQ precursor protein] + 5'-deoxyadenosine + L-methionine + H(+)</text>
        <dbReference type="Rhea" id="RHEA:56836"/>
        <dbReference type="Rhea" id="RHEA-COMP:14800"/>
        <dbReference type="Rhea" id="RHEA-COMP:14801"/>
        <dbReference type="ChEBI" id="CHEBI:15378"/>
        <dbReference type="ChEBI" id="CHEBI:17319"/>
        <dbReference type="ChEBI" id="CHEBI:57844"/>
        <dbReference type="ChEBI" id="CHEBI:59789"/>
        <dbReference type="ChEBI" id="CHEBI:141026"/>
        <dbReference type="ChEBI" id="CHEBI:141027"/>
        <dbReference type="EC" id="1.21.98.4"/>
    </reaction>
</comment>
<comment type="cofactor">
    <cofactor evidence="1">
        <name>[4Fe-4S] cluster</name>
        <dbReference type="ChEBI" id="CHEBI:49883"/>
    </cofactor>
    <text evidence="1">Binds 1 [4Fe-4S] cluster. The cluster is coordinated with 3 cysteines and an exchangeable S-adenosyl-L-methionine.</text>
</comment>
<comment type="pathway">
    <text>Cofactor biosynthesis; pyrroloquinoline quinone biosynthesis.</text>
</comment>
<comment type="subunit">
    <text evidence="3">Interacts with PqqD. The interaction is necessary for activity of PqqE.</text>
</comment>
<comment type="similarity">
    <text evidence="5">Belongs to the radical SAM superfamily. PqqE family.</text>
</comment>
<comment type="sequence caution" evidence="5">
    <conflict type="erroneous initiation">
        <sequence resource="EMBL-CDS" id="ACS39592"/>
    </conflict>
</comment>
<proteinExistence type="evidence at protein level"/>
<keyword id="KW-0002">3D-structure</keyword>
<keyword id="KW-0004">4Fe-4S</keyword>
<keyword id="KW-0408">Iron</keyword>
<keyword id="KW-0411">Iron-sulfur</keyword>
<keyword id="KW-0479">Metal-binding</keyword>
<keyword id="KW-0560">Oxidoreductase</keyword>
<keyword id="KW-0884">PQQ biosynthesis</keyword>
<keyword id="KW-1185">Reference proteome</keyword>
<keyword id="KW-0949">S-adenosyl-L-methionine</keyword>
<organism>
    <name type="scientific">Methylorubrum extorquens (strain ATCC 14718 / DSM 1338 / JCM 2805 / NCIMB 9133 / AM1)</name>
    <name type="common">Methylobacterium extorquens</name>
    <dbReference type="NCBI Taxonomy" id="272630"/>
    <lineage>
        <taxon>Bacteria</taxon>
        <taxon>Pseudomonadati</taxon>
        <taxon>Pseudomonadota</taxon>
        <taxon>Alphaproteobacteria</taxon>
        <taxon>Hyphomicrobiales</taxon>
        <taxon>Methylobacteriaceae</taxon>
        <taxon>Methylorubrum</taxon>
    </lineage>
</organism>
<sequence>MNAPTPAPSPVDVIPAPVGLLAELTHRCPLRCPYCSNPLELDRRSAELDTQTWLRVLTEAAGLGVLHVHLSGGEPTARPDIVEITAKCAELGLYSNLITSGVGGALAKLDALYDVGLDHVQLSVQGVDAANAEKIGGLKNAQPQKMQFAARVTELGLPLTLNSVIHRGNIHEVPGFIDLAVKLGAKRLEVAHTQYYGWAYVNRAALMPDKSQVDESIRIVEAARERLKGQLVIDLVVPDYYAKYPKACAGGWGRKLMNVTPQGKVLPCHAAETIPGLEFWYVTDHALGEIWTKSPAFAAYRGTSWMKEPCRSCDRREKDWGGCRCQALALTGDAANTDPACSLSPLHAKMRDLAKEEAAETPPDYIYRSIGTNVQNPLSEKAPL</sequence>
<dbReference type="EC" id="1.21.98.4" evidence="3 4"/>
<dbReference type="EMBL" id="U72662">
    <property type="protein sequence ID" value="AAB58898.1"/>
    <property type="molecule type" value="Genomic_DNA"/>
</dbReference>
<dbReference type="EMBL" id="CP001510">
    <property type="protein sequence ID" value="ACS39592.1"/>
    <property type="status" value="ALT_INIT"/>
    <property type="molecule type" value="Genomic_DNA"/>
</dbReference>
<dbReference type="RefSeq" id="WP_003597604.1">
    <property type="nucleotide sequence ID" value="NC_012808.1"/>
</dbReference>
<dbReference type="PDB" id="6C8V">
    <property type="method" value="X-ray"/>
    <property type="resolution" value="3.20 A"/>
    <property type="chains" value="A=12-384"/>
</dbReference>
<dbReference type="PDBsum" id="6C8V"/>
<dbReference type="SMR" id="P71517"/>
<dbReference type="STRING" id="272630.MexAM1_META1p1748"/>
<dbReference type="KEGG" id="mea:Mex_1p1748"/>
<dbReference type="eggNOG" id="COG0535">
    <property type="taxonomic scope" value="Bacteria"/>
</dbReference>
<dbReference type="HOGENOM" id="CLU_009273_4_7_5"/>
<dbReference type="OrthoDB" id="9792276at2"/>
<dbReference type="BRENDA" id="1.21.98.4">
    <property type="organism ID" value="3296"/>
</dbReference>
<dbReference type="UniPathway" id="UPA00539"/>
<dbReference type="Proteomes" id="UP000009081">
    <property type="component" value="Chromosome"/>
</dbReference>
<dbReference type="GO" id="GO:0051539">
    <property type="term" value="F:4 iron, 4 sulfur cluster binding"/>
    <property type="evidence" value="ECO:0007669"/>
    <property type="project" value="UniProtKB-KW"/>
</dbReference>
<dbReference type="GO" id="GO:0009975">
    <property type="term" value="F:cyclase activity"/>
    <property type="evidence" value="ECO:0007669"/>
    <property type="project" value="UniProtKB-UniRule"/>
</dbReference>
<dbReference type="GO" id="GO:0005506">
    <property type="term" value="F:iron ion binding"/>
    <property type="evidence" value="ECO:0007669"/>
    <property type="project" value="UniProtKB-UniRule"/>
</dbReference>
<dbReference type="GO" id="GO:0016491">
    <property type="term" value="F:oxidoreductase activity"/>
    <property type="evidence" value="ECO:0007669"/>
    <property type="project" value="UniProtKB-KW"/>
</dbReference>
<dbReference type="GO" id="GO:1904047">
    <property type="term" value="F:S-adenosyl-L-methionine binding"/>
    <property type="evidence" value="ECO:0007669"/>
    <property type="project" value="UniProtKB-UniRule"/>
</dbReference>
<dbReference type="GO" id="GO:0018189">
    <property type="term" value="P:pyrroloquinoline quinone biosynthetic process"/>
    <property type="evidence" value="ECO:0007669"/>
    <property type="project" value="UniProtKB-UniRule"/>
</dbReference>
<dbReference type="CDD" id="cd01335">
    <property type="entry name" value="Radical_SAM"/>
    <property type="match status" value="1"/>
</dbReference>
<dbReference type="CDD" id="cd21119">
    <property type="entry name" value="SPASM_PqqE"/>
    <property type="match status" value="1"/>
</dbReference>
<dbReference type="Gene3D" id="3.20.20.70">
    <property type="entry name" value="Aldolase class I"/>
    <property type="match status" value="1"/>
</dbReference>
<dbReference type="HAMAP" id="MF_00660">
    <property type="entry name" value="PqqE"/>
    <property type="match status" value="1"/>
</dbReference>
<dbReference type="InterPro" id="IPR023885">
    <property type="entry name" value="4Fe4S-binding_SPASM_dom"/>
</dbReference>
<dbReference type="InterPro" id="IPR013785">
    <property type="entry name" value="Aldolase_TIM"/>
</dbReference>
<dbReference type="InterPro" id="IPR000385">
    <property type="entry name" value="MoaA_NifB_PqqE_Fe-S-bd_CS"/>
</dbReference>
<dbReference type="InterPro" id="IPR011843">
    <property type="entry name" value="PQQ_synth_PqqE_bac"/>
</dbReference>
<dbReference type="InterPro" id="IPR017200">
    <property type="entry name" value="PqqE-like"/>
</dbReference>
<dbReference type="InterPro" id="IPR050377">
    <property type="entry name" value="Radical_SAM_PqqE_MftC-like"/>
</dbReference>
<dbReference type="InterPro" id="IPR007197">
    <property type="entry name" value="rSAM"/>
</dbReference>
<dbReference type="NCBIfam" id="TIGR02109">
    <property type="entry name" value="PQQ_syn_pqqE"/>
    <property type="match status" value="1"/>
</dbReference>
<dbReference type="NCBIfam" id="TIGR04085">
    <property type="entry name" value="rSAM_more_4Fe4S"/>
    <property type="match status" value="1"/>
</dbReference>
<dbReference type="PANTHER" id="PTHR11228:SF7">
    <property type="entry name" value="PQQA PEPTIDE CYCLASE"/>
    <property type="match status" value="1"/>
</dbReference>
<dbReference type="PANTHER" id="PTHR11228">
    <property type="entry name" value="RADICAL SAM DOMAIN PROTEIN"/>
    <property type="match status" value="1"/>
</dbReference>
<dbReference type="Pfam" id="PF04055">
    <property type="entry name" value="Radical_SAM"/>
    <property type="match status" value="1"/>
</dbReference>
<dbReference type="Pfam" id="PF13186">
    <property type="entry name" value="SPASM"/>
    <property type="match status" value="1"/>
</dbReference>
<dbReference type="PIRSF" id="PIRSF037420">
    <property type="entry name" value="PQQ_syn_pqqE"/>
    <property type="match status" value="1"/>
</dbReference>
<dbReference type="SFLD" id="SFLDF00280">
    <property type="entry name" value="coenzyme_PQQ_synthesis_protein"/>
    <property type="match status" value="1"/>
</dbReference>
<dbReference type="SFLD" id="SFLDS00029">
    <property type="entry name" value="Radical_SAM"/>
    <property type="match status" value="1"/>
</dbReference>
<dbReference type="SUPFAM" id="SSF102114">
    <property type="entry name" value="Radical SAM enzymes"/>
    <property type="match status" value="1"/>
</dbReference>
<dbReference type="PROSITE" id="PS01305">
    <property type="entry name" value="MOAA_NIFB_PQQE"/>
    <property type="match status" value="1"/>
</dbReference>
<dbReference type="PROSITE" id="PS51918">
    <property type="entry name" value="RADICAL_SAM"/>
    <property type="match status" value="1"/>
</dbReference>